<sequence length="312" mass="33775">MELLKRKLYAKILMMVMVIWIAPMTNGHDHASHVPGGRPGAHPSHGAHPAHGAHPSHGAHPSHGAHPSHGAHPSHGALPSHGGQVPHSGWGHGRATFYGDINGGETQQGACGYGDLHKQGYGLETAALSTALFNNGSRCGACYEIMCEHAPQWCLPGSIKITATNFCPPDFTKPNDNWCNPPQKHFDLSQPMFLKIAKYKAGVVPVKFRRVPCAKIGGVKFEIKGNPHFLMILPYNVGGAGAVRAMQIKGTRTQWIAMKKNWGQIWSTGVVLTGQCLSFRLTTSDGVMKEFIDVTPPDWKCNGQSFDGKVNF</sequence>
<protein>
    <recommendedName>
        <fullName>Expansin-A24</fullName>
        <shortName>AtEXPA24</shortName>
    </recommendedName>
    <alternativeName>
        <fullName>Alpha-expansin-24</fullName>
        <shortName>At-EXP24</shortName>
        <shortName>AtEx24</shortName>
    </alternativeName>
    <alternativeName>
        <fullName>Ath-ExpAlpha-1.19</fullName>
    </alternativeName>
</protein>
<dbReference type="EMBL" id="AB010694">
    <property type="protein sequence ID" value="BAB09386.1"/>
    <property type="status" value="ALT_SEQ"/>
    <property type="molecule type" value="Genomic_DNA"/>
</dbReference>
<dbReference type="EMBL" id="CP002688">
    <property type="protein sequence ID" value="AED94418.2"/>
    <property type="molecule type" value="Genomic_DNA"/>
</dbReference>
<dbReference type="EMBL" id="DQ056700">
    <property type="protein sequence ID" value="AAY78846.1"/>
    <property type="molecule type" value="mRNA"/>
</dbReference>
<dbReference type="RefSeq" id="NP_198747.2">
    <property type="nucleotide sequence ID" value="NM_123293.2"/>
</dbReference>
<dbReference type="SMR" id="Q9FL76"/>
<dbReference type="FunCoup" id="Q9FL76">
    <property type="interactions" value="27"/>
</dbReference>
<dbReference type="STRING" id="3702.Q9FL76"/>
<dbReference type="PaxDb" id="3702-AT5G39310.1"/>
<dbReference type="ProteomicsDB" id="222245"/>
<dbReference type="EnsemblPlants" id="AT5G39310.1">
    <property type="protein sequence ID" value="AT5G39310.1"/>
    <property type="gene ID" value="AT5G39310"/>
</dbReference>
<dbReference type="GeneID" id="833927"/>
<dbReference type="Gramene" id="AT5G39310.1">
    <property type="protein sequence ID" value="AT5G39310.1"/>
    <property type="gene ID" value="AT5G39310"/>
</dbReference>
<dbReference type="KEGG" id="ath:AT5G39310"/>
<dbReference type="Araport" id="AT5G39310"/>
<dbReference type="TAIR" id="AT5G39310">
    <property type="gene designation" value="EXPA24"/>
</dbReference>
<dbReference type="eggNOG" id="ENOG502QQNJ">
    <property type="taxonomic scope" value="Eukaryota"/>
</dbReference>
<dbReference type="HOGENOM" id="CLU_027462_0_1_1"/>
<dbReference type="InParanoid" id="Q9FL76"/>
<dbReference type="OMA" id="GNPHFLM"/>
<dbReference type="PhylomeDB" id="Q9FL76"/>
<dbReference type="PRO" id="PR:Q9FL76"/>
<dbReference type="Proteomes" id="UP000006548">
    <property type="component" value="Chromosome 5"/>
</dbReference>
<dbReference type="ExpressionAtlas" id="Q9FL76">
    <property type="expression patterns" value="baseline and differential"/>
</dbReference>
<dbReference type="GO" id="GO:0005576">
    <property type="term" value="C:extracellular region"/>
    <property type="evidence" value="ECO:0007669"/>
    <property type="project" value="UniProtKB-KW"/>
</dbReference>
<dbReference type="GO" id="GO:0016020">
    <property type="term" value="C:membrane"/>
    <property type="evidence" value="ECO:0007669"/>
    <property type="project" value="UniProtKB-SubCell"/>
</dbReference>
<dbReference type="GO" id="GO:0009653">
    <property type="term" value="P:anatomical structure morphogenesis"/>
    <property type="evidence" value="ECO:0007669"/>
    <property type="project" value="UniProtKB-ARBA"/>
</dbReference>
<dbReference type="GO" id="GO:0009828">
    <property type="term" value="P:plant-type cell wall loosening"/>
    <property type="evidence" value="ECO:0000250"/>
    <property type="project" value="UniProtKB"/>
</dbReference>
<dbReference type="CDD" id="cd22274">
    <property type="entry name" value="DPBB_EXPA_N"/>
    <property type="match status" value="1"/>
</dbReference>
<dbReference type="Gene3D" id="2.60.40.760">
    <property type="entry name" value="Expansin, cellulose-binding-like domain"/>
    <property type="match status" value="1"/>
</dbReference>
<dbReference type="Gene3D" id="2.40.40.10">
    <property type="entry name" value="RlpA-like domain"/>
    <property type="match status" value="1"/>
</dbReference>
<dbReference type="InterPro" id="IPR007118">
    <property type="entry name" value="Expan_Lol_pI"/>
</dbReference>
<dbReference type="InterPro" id="IPR002963">
    <property type="entry name" value="Expansin"/>
</dbReference>
<dbReference type="InterPro" id="IPR007112">
    <property type="entry name" value="Expansin/allergen_DPBB_dom"/>
</dbReference>
<dbReference type="InterPro" id="IPR007117">
    <property type="entry name" value="Expansin_CBD"/>
</dbReference>
<dbReference type="InterPro" id="IPR036749">
    <property type="entry name" value="Expansin_CBD_sf"/>
</dbReference>
<dbReference type="InterPro" id="IPR009009">
    <property type="entry name" value="RlpA-like_DPBB"/>
</dbReference>
<dbReference type="InterPro" id="IPR036908">
    <property type="entry name" value="RlpA-like_sf"/>
</dbReference>
<dbReference type="PANTHER" id="PTHR31867">
    <property type="entry name" value="EXPANSIN-A15"/>
    <property type="match status" value="1"/>
</dbReference>
<dbReference type="Pfam" id="PF03330">
    <property type="entry name" value="DPBB_1"/>
    <property type="match status" value="1"/>
</dbReference>
<dbReference type="Pfam" id="PF01357">
    <property type="entry name" value="Expansin_C"/>
    <property type="match status" value="1"/>
</dbReference>
<dbReference type="PRINTS" id="PR01226">
    <property type="entry name" value="EXPANSIN"/>
</dbReference>
<dbReference type="PRINTS" id="PR01225">
    <property type="entry name" value="EXPANSNFAMLY"/>
</dbReference>
<dbReference type="SMART" id="SM00837">
    <property type="entry name" value="DPBB_1"/>
    <property type="match status" value="1"/>
</dbReference>
<dbReference type="SUPFAM" id="SSF50685">
    <property type="entry name" value="Barwin-like endoglucanases"/>
    <property type="match status" value="1"/>
</dbReference>
<dbReference type="SUPFAM" id="SSF49590">
    <property type="entry name" value="PHL pollen allergen"/>
    <property type="match status" value="1"/>
</dbReference>
<dbReference type="PROSITE" id="PS50843">
    <property type="entry name" value="EXPANSIN_CBD"/>
    <property type="match status" value="1"/>
</dbReference>
<dbReference type="PROSITE" id="PS50842">
    <property type="entry name" value="EXPANSIN_EG45"/>
    <property type="match status" value="1"/>
</dbReference>
<evidence type="ECO:0000250" key="1"/>
<evidence type="ECO:0000255" key="2"/>
<evidence type="ECO:0000255" key="3">
    <source>
        <dbReference type="PROSITE-ProRule" id="PRU00078"/>
    </source>
</evidence>
<evidence type="ECO:0000255" key="4">
    <source>
        <dbReference type="PROSITE-ProRule" id="PRU00079"/>
    </source>
</evidence>
<evidence type="ECO:0000256" key="5">
    <source>
        <dbReference type="SAM" id="MobiDB-lite"/>
    </source>
</evidence>
<evidence type="ECO:0000305" key="6"/>
<gene>
    <name type="primary">EXPA24</name>
    <name type="synonym">EXP24</name>
    <name type="ordered locus">At5g39310</name>
    <name type="ORF">K3K3.22</name>
    <name type="ORF">K3K3_160</name>
</gene>
<name>EXP24_ARATH</name>
<organism>
    <name type="scientific">Arabidopsis thaliana</name>
    <name type="common">Mouse-ear cress</name>
    <dbReference type="NCBI Taxonomy" id="3702"/>
    <lineage>
        <taxon>Eukaryota</taxon>
        <taxon>Viridiplantae</taxon>
        <taxon>Streptophyta</taxon>
        <taxon>Embryophyta</taxon>
        <taxon>Tracheophyta</taxon>
        <taxon>Spermatophyta</taxon>
        <taxon>Magnoliopsida</taxon>
        <taxon>eudicotyledons</taxon>
        <taxon>Gunneridae</taxon>
        <taxon>Pentapetalae</taxon>
        <taxon>rosids</taxon>
        <taxon>malvids</taxon>
        <taxon>Brassicales</taxon>
        <taxon>Brassicaceae</taxon>
        <taxon>Camelineae</taxon>
        <taxon>Arabidopsis</taxon>
    </lineage>
</organism>
<comment type="function">
    <text evidence="1">Causes loosening and extension of plant cell walls by disrupting non-covalent bonding between cellulose microfibrils and matrix glucans. No enzymatic activity has been found (By similarity).</text>
</comment>
<comment type="subcellular location">
    <subcellularLocation>
        <location>Secreted</location>
        <location>Cell wall</location>
    </subcellularLocation>
    <subcellularLocation>
        <location>Membrane</location>
        <topology>Peripheral membrane protein</topology>
    </subcellularLocation>
</comment>
<comment type="similarity">
    <text evidence="6">Belongs to the expansin family. Expansin A subfamily.</text>
</comment>
<comment type="sequence caution" evidence="6">
    <conflict type="erroneous gene model prediction">
        <sequence resource="EMBL-CDS" id="BAB09386"/>
    </conflict>
</comment>
<comment type="online information" name="EXPANSIN homepage">
    <link uri="https://www.dept.psu.edu/biology/groups/expansins/index.htm"/>
</comment>
<accession>Q9FL76</accession>
<accession>F4KEE0</accession>
<accession>Q4PSD6</accession>
<proteinExistence type="evidence at transcript level"/>
<keyword id="KW-0134">Cell wall</keyword>
<keyword id="KW-0961">Cell wall biogenesis/degradation</keyword>
<keyword id="KW-0472">Membrane</keyword>
<keyword id="KW-1185">Reference proteome</keyword>
<keyword id="KW-0677">Repeat</keyword>
<keyword id="KW-0964">Secreted</keyword>
<keyword id="KW-0732">Signal</keyword>
<feature type="signal peptide" evidence="2">
    <location>
        <begin position="1"/>
        <end position="27"/>
    </location>
</feature>
<feature type="chain" id="PRO_0000008704" description="Expansin-A24">
    <location>
        <begin position="28"/>
        <end position="312"/>
    </location>
</feature>
<feature type="repeat" description="1">
    <location>
        <begin position="42"/>
        <end position="47"/>
    </location>
</feature>
<feature type="repeat" description="2">
    <location>
        <begin position="48"/>
        <end position="53"/>
    </location>
</feature>
<feature type="repeat" description="3">
    <location>
        <begin position="54"/>
        <end position="59"/>
    </location>
</feature>
<feature type="repeat" description="4">
    <location>
        <begin position="60"/>
        <end position="65"/>
    </location>
</feature>
<feature type="repeat" description="5">
    <location>
        <begin position="66"/>
        <end position="71"/>
    </location>
</feature>
<feature type="repeat" description="6">
    <location>
        <begin position="72"/>
        <end position="77"/>
    </location>
</feature>
<feature type="domain" description="Expansin-like EG45" evidence="4">
    <location>
        <begin position="108"/>
        <end position="218"/>
    </location>
</feature>
<feature type="domain" description="Expansin-like CBD" evidence="3">
    <location>
        <begin position="228"/>
        <end position="307"/>
    </location>
</feature>
<feature type="region of interest" description="Disordered" evidence="5">
    <location>
        <begin position="31"/>
        <end position="86"/>
    </location>
</feature>
<feature type="region of interest" description="6 X 6 AA tandem repeats of H-P-S-H-G-A">
    <location>
        <begin position="42"/>
        <end position="77"/>
    </location>
</feature>
<feature type="compositionally biased region" description="Low complexity" evidence="5">
    <location>
        <begin position="40"/>
        <end position="77"/>
    </location>
</feature>
<reference key="1">
    <citation type="journal article" date="1998" name="DNA Res.">
        <title>Structural analysis of Arabidopsis thaliana chromosome 5. V. Sequence features of the regions of 1,381,565 bp covered by twenty one physically assigned P1 and TAC clones.</title>
        <authorList>
            <person name="Kaneko T."/>
            <person name="Kotani H."/>
            <person name="Nakamura Y."/>
            <person name="Sato S."/>
            <person name="Asamizu E."/>
            <person name="Miyajima N."/>
            <person name="Tabata S."/>
        </authorList>
    </citation>
    <scope>NUCLEOTIDE SEQUENCE [LARGE SCALE GENOMIC DNA]</scope>
    <source>
        <strain>cv. Columbia</strain>
    </source>
</reference>
<reference key="2">
    <citation type="journal article" date="2017" name="Plant J.">
        <title>Araport11: a complete reannotation of the Arabidopsis thaliana reference genome.</title>
        <authorList>
            <person name="Cheng C.Y."/>
            <person name="Krishnakumar V."/>
            <person name="Chan A.P."/>
            <person name="Thibaud-Nissen F."/>
            <person name="Schobel S."/>
            <person name="Town C.D."/>
        </authorList>
    </citation>
    <scope>GENOME REANNOTATION</scope>
    <source>
        <strain>cv. Columbia</strain>
    </source>
</reference>
<reference key="3">
    <citation type="submission" date="2005-05" db="EMBL/GenBank/DDBJ databases">
        <authorList>
            <person name="Underwood B.A."/>
            <person name="Xiao Y.-L."/>
            <person name="Moskal W.A. Jr."/>
            <person name="Monaghan E.L."/>
            <person name="Wang W."/>
            <person name="Redman J.C."/>
            <person name="Wu H.C."/>
            <person name="Utterback T."/>
            <person name="Town C.D."/>
        </authorList>
    </citation>
    <scope>NUCLEOTIDE SEQUENCE [LARGE SCALE MRNA] OF 17-312</scope>
    <source>
        <strain>cv. Columbia</strain>
    </source>
</reference>
<reference key="4">
    <citation type="journal article" date="2004" name="Plant Mol. Biol.">
        <title>Nomenclature for members of the expansin superfamily of genes and proteins.</title>
        <authorList>
            <person name="Kende H."/>
            <person name="Bradford K.J."/>
            <person name="Brummell D.A."/>
            <person name="Cho H.-T."/>
            <person name="Cosgrove D.J."/>
            <person name="Fleming A.J."/>
            <person name="Gehring C."/>
            <person name="Lee Y."/>
            <person name="McQueen-Mason S.J."/>
            <person name="Rose J.K.C."/>
            <person name="Voesenek L.A.C."/>
        </authorList>
    </citation>
    <scope>NOMENCLATURE</scope>
</reference>